<proteinExistence type="inferred from homology"/>
<dbReference type="EC" id="7.1.1.2" evidence="1"/>
<dbReference type="EMBL" id="X72004">
    <property type="protein sequence ID" value="CAA50887.1"/>
    <property type="molecule type" value="Genomic_DNA"/>
</dbReference>
<dbReference type="PIR" id="S41845">
    <property type="entry name" value="S41845"/>
</dbReference>
<dbReference type="RefSeq" id="NP_007079.1">
    <property type="nucleotide sequence ID" value="NC_001602.1"/>
</dbReference>
<dbReference type="SMR" id="P38602"/>
<dbReference type="GeneID" id="807751"/>
<dbReference type="CTD" id="4540"/>
<dbReference type="GO" id="GO:0005743">
    <property type="term" value="C:mitochondrial inner membrane"/>
    <property type="evidence" value="ECO:0000250"/>
    <property type="project" value="UniProtKB"/>
</dbReference>
<dbReference type="GO" id="GO:0008137">
    <property type="term" value="F:NADH dehydrogenase (ubiquinone) activity"/>
    <property type="evidence" value="ECO:0000250"/>
    <property type="project" value="UniProtKB"/>
</dbReference>
<dbReference type="GO" id="GO:0015990">
    <property type="term" value="P:electron transport coupled proton transport"/>
    <property type="evidence" value="ECO:0007669"/>
    <property type="project" value="TreeGrafter"/>
</dbReference>
<dbReference type="GO" id="GO:0006120">
    <property type="term" value="P:mitochondrial electron transport, NADH to ubiquinone"/>
    <property type="evidence" value="ECO:0000250"/>
    <property type="project" value="UniProtKB"/>
</dbReference>
<dbReference type="GO" id="GO:0032981">
    <property type="term" value="P:mitochondrial respiratory chain complex I assembly"/>
    <property type="evidence" value="ECO:0000250"/>
    <property type="project" value="UniProtKB"/>
</dbReference>
<dbReference type="InterPro" id="IPR010934">
    <property type="entry name" value="NADH_DH_su5_C"/>
</dbReference>
<dbReference type="InterPro" id="IPR018393">
    <property type="entry name" value="NADHpl_OxRdtase_5_subgr"/>
</dbReference>
<dbReference type="InterPro" id="IPR001750">
    <property type="entry name" value="ND/Mrp_TM"/>
</dbReference>
<dbReference type="InterPro" id="IPR003945">
    <property type="entry name" value="NU5C-like"/>
</dbReference>
<dbReference type="InterPro" id="IPR001516">
    <property type="entry name" value="Proton_antipo_N"/>
</dbReference>
<dbReference type="NCBIfam" id="TIGR01974">
    <property type="entry name" value="NDH_I_L"/>
    <property type="match status" value="1"/>
</dbReference>
<dbReference type="PANTHER" id="PTHR42829">
    <property type="entry name" value="NADH-UBIQUINONE OXIDOREDUCTASE CHAIN 5"/>
    <property type="match status" value="1"/>
</dbReference>
<dbReference type="PANTHER" id="PTHR42829:SF2">
    <property type="entry name" value="NADH-UBIQUINONE OXIDOREDUCTASE CHAIN 5"/>
    <property type="match status" value="1"/>
</dbReference>
<dbReference type="Pfam" id="PF06455">
    <property type="entry name" value="NADH5_C"/>
    <property type="match status" value="1"/>
</dbReference>
<dbReference type="Pfam" id="PF00361">
    <property type="entry name" value="Proton_antipo_M"/>
    <property type="match status" value="1"/>
</dbReference>
<dbReference type="Pfam" id="PF00662">
    <property type="entry name" value="Proton_antipo_N"/>
    <property type="match status" value="1"/>
</dbReference>
<dbReference type="PRINTS" id="PR01434">
    <property type="entry name" value="NADHDHGNASE5"/>
</dbReference>
<reference key="1">
    <citation type="journal article" date="1993" name="J. Mol. Evol.">
        <title>The nucleotide sequence of the mitochondrial DNA molecule of the grey seal, Halichoerus grypus, and a comparison with mitochondrial sequences of other true seals.</title>
        <authorList>
            <person name="Arnason U."/>
            <person name="Gullberg A."/>
            <person name="Johnsson E."/>
            <person name="Ledje C."/>
        </authorList>
    </citation>
    <scope>NUCLEOTIDE SEQUENCE [GENOMIC DNA]</scope>
</reference>
<organism>
    <name type="scientific">Halichoerus grypus</name>
    <name type="common">Gray seal</name>
    <name type="synonym">Phoca grypus</name>
    <dbReference type="NCBI Taxonomy" id="9711"/>
    <lineage>
        <taxon>Eukaryota</taxon>
        <taxon>Metazoa</taxon>
        <taxon>Chordata</taxon>
        <taxon>Craniata</taxon>
        <taxon>Vertebrata</taxon>
        <taxon>Euteleostomi</taxon>
        <taxon>Mammalia</taxon>
        <taxon>Eutheria</taxon>
        <taxon>Laurasiatheria</taxon>
        <taxon>Carnivora</taxon>
        <taxon>Caniformia</taxon>
        <taxon>Pinnipedia</taxon>
        <taxon>Phocidae</taxon>
        <taxon>Phocinae</taxon>
        <taxon>Halichoerus</taxon>
    </lineage>
</organism>
<accession>P38602</accession>
<sequence length="609" mass="68656">MKVINLFASSIITTLSMLTLPIVLTSTSIYKNKLYPQYVKTAISYAFMISMIPTTMFIYSGQEMIISNWHWMTIQTMKLTLSFKLDHFSMIFVPVALFVTWSIMEFSMWYMHSDPFINRFFKYLLMFLITMMILVTANNLFQLFIGWEGVGIMSFLLIGWWHGRTDANTAALQAVLYNRIGDVGFIMAMAWFLINLNTWELQQIFISHHNNLNVPLMGLLLAATGKSAQFGLHPWLPSAMEGPTPVSALLHSSTMVVAGVFLLIRFHPLMEHNTMMQTTTLCLGAITTLFTAICALTQNDIKKIIAFSTSSQLGLMIVTIGINQPHLAFLHICTHAFFKAMLFLCSGSIIHNLNDEQDIRKMGGLYKVLPFTTTSLIVGSLALTGMPFLTGFYSKDLIIETANTSYTNAWALLLTLVATSMTAAYSTRIMFFALLDQPRFNPMITINENSPLLINPIKRLLLGSIFAGYLISYNITPTSTPQMTMPHYLKLMALTVTLLGFILALELNLTSQSLKLKHPSNLFKFSNLLGYFPTIIHRYMPMVNLSASQKLASTLLDAIWLENALPKSISYFHMKSSVTISNQKGLIKLYFLSFIITLILALMMINSHE</sequence>
<comment type="function">
    <text evidence="1">Core subunit of the mitochondrial membrane respiratory chain NADH dehydrogenase (Complex I) which catalyzes electron transfer from NADH through the respiratory chain, using ubiquinone as an electron acceptor. Essential for the catalytic activity and assembly of complex I.</text>
</comment>
<comment type="catalytic activity">
    <reaction evidence="1">
        <text>a ubiquinone + NADH + 5 H(+)(in) = a ubiquinol + NAD(+) + 4 H(+)(out)</text>
        <dbReference type="Rhea" id="RHEA:29091"/>
        <dbReference type="Rhea" id="RHEA-COMP:9565"/>
        <dbReference type="Rhea" id="RHEA-COMP:9566"/>
        <dbReference type="ChEBI" id="CHEBI:15378"/>
        <dbReference type="ChEBI" id="CHEBI:16389"/>
        <dbReference type="ChEBI" id="CHEBI:17976"/>
        <dbReference type="ChEBI" id="CHEBI:57540"/>
        <dbReference type="ChEBI" id="CHEBI:57945"/>
        <dbReference type="EC" id="7.1.1.2"/>
    </reaction>
</comment>
<comment type="subunit">
    <text evidence="2">Core subunit of respiratory chain NADH dehydrogenase (Complex I) which is composed of 45 different subunits.</text>
</comment>
<comment type="subcellular location">
    <subcellularLocation>
        <location evidence="2">Mitochondrion inner membrane</location>
        <topology evidence="3">Multi-pass membrane protein</topology>
    </subcellularLocation>
</comment>
<comment type="similarity">
    <text evidence="4">Belongs to the complex I subunit 5 family.</text>
</comment>
<evidence type="ECO:0000250" key="1">
    <source>
        <dbReference type="UniProtKB" id="P03915"/>
    </source>
</evidence>
<evidence type="ECO:0000250" key="2">
    <source>
        <dbReference type="UniProtKB" id="P03920"/>
    </source>
</evidence>
<evidence type="ECO:0000255" key="3"/>
<evidence type="ECO:0000305" key="4"/>
<gene>
    <name type="primary">MT-ND5</name>
    <name type="synonym">MTND5</name>
    <name type="synonym">NADH5</name>
    <name type="synonym">ND5</name>
</gene>
<protein>
    <recommendedName>
        <fullName>NADH-ubiquinone oxidoreductase chain 5</fullName>
        <ecNumber evidence="1">7.1.1.2</ecNumber>
    </recommendedName>
    <alternativeName>
        <fullName>NADH dehydrogenase subunit 5</fullName>
    </alternativeName>
</protein>
<geneLocation type="mitochondrion"/>
<name>NU5M_HALGR</name>
<feature type="chain" id="PRO_0000118098" description="NADH-ubiquinone oxidoreductase chain 5">
    <location>
        <begin position="1"/>
        <end position="609"/>
    </location>
</feature>
<feature type="transmembrane region" description="Helical" evidence="3">
    <location>
        <begin position="3"/>
        <end position="23"/>
    </location>
</feature>
<feature type="transmembrane region" description="Helical" evidence="3">
    <location>
        <begin position="41"/>
        <end position="61"/>
    </location>
</feature>
<feature type="transmembrane region" description="Helical" evidence="3">
    <location>
        <begin position="90"/>
        <end position="110"/>
    </location>
</feature>
<feature type="transmembrane region" description="Helical" evidence="3">
    <location>
        <begin position="115"/>
        <end position="135"/>
    </location>
</feature>
<feature type="transmembrane region" description="Helical" evidence="3">
    <location>
        <begin position="140"/>
        <end position="160"/>
    </location>
</feature>
<feature type="transmembrane region" description="Helical" evidence="3">
    <location>
        <begin position="174"/>
        <end position="194"/>
    </location>
</feature>
<feature type="transmembrane region" description="Helical" evidence="3">
    <location>
        <begin position="214"/>
        <end position="236"/>
    </location>
</feature>
<feature type="transmembrane region" description="Helical" evidence="3">
    <location>
        <begin position="244"/>
        <end position="264"/>
    </location>
</feature>
<feature type="transmembrane region" description="Helical" evidence="3">
    <location>
        <begin position="276"/>
        <end position="296"/>
    </location>
</feature>
<feature type="transmembrane region" description="Helical" evidence="3">
    <location>
        <begin position="304"/>
        <end position="323"/>
    </location>
</feature>
<feature type="transmembrane region" description="Helical" evidence="3">
    <location>
        <begin position="328"/>
        <end position="350"/>
    </location>
</feature>
<feature type="transmembrane region" description="Helical" evidence="3">
    <location>
        <begin position="368"/>
        <end position="388"/>
    </location>
</feature>
<feature type="transmembrane region" description="Helical" evidence="3">
    <location>
        <begin position="410"/>
        <end position="432"/>
    </location>
</feature>
<feature type="transmembrane region" description="Helical" evidence="3">
    <location>
        <begin position="460"/>
        <end position="480"/>
    </location>
</feature>
<feature type="transmembrane region" description="Helical" evidence="3">
    <location>
        <begin position="491"/>
        <end position="511"/>
    </location>
</feature>
<feature type="transmembrane region" description="Helical" evidence="3">
    <location>
        <begin position="585"/>
        <end position="605"/>
    </location>
</feature>
<keyword id="KW-0249">Electron transport</keyword>
<keyword id="KW-0472">Membrane</keyword>
<keyword id="KW-0496">Mitochondrion</keyword>
<keyword id="KW-0999">Mitochondrion inner membrane</keyword>
<keyword id="KW-0520">NAD</keyword>
<keyword id="KW-0679">Respiratory chain</keyword>
<keyword id="KW-1278">Translocase</keyword>
<keyword id="KW-0812">Transmembrane</keyword>
<keyword id="KW-1133">Transmembrane helix</keyword>
<keyword id="KW-0813">Transport</keyword>
<keyword id="KW-0830">Ubiquinone</keyword>